<evidence type="ECO:0000255" key="1">
    <source>
        <dbReference type="HAMAP-Rule" id="MF_01595"/>
    </source>
</evidence>
<evidence type="ECO:0000256" key="2">
    <source>
        <dbReference type="SAM" id="MobiDB-lite"/>
    </source>
</evidence>
<accession>A8GWV2</accession>
<sequence>MFNEIIKTVEWGGKTLELSTGKIARQADGAVTVKMGNSVLLCTAVTAAKAKEGIGFFPLTINYREMAYAAGKIPGGFFKREGKASDREVLVSRLIDRPIRPLFHPAFVNETFVTCTVLSYDPETPVDILAIIGASAALSLSPAPYLEIVAASKVGLINGEFFLHPTLDLLKTSQLDLVVAGTNDSVMMVESEAHLLSEEQMLAAVKFGFDSFQPVVNIIKELAAEAKKSKLEMQDLYPAELKNEIKKLFAKEIEQTFAIKSKQERSTNLELIPEKVLKHFADDIESKKYNNYQIESALKSVESDILRGNILQKNKRIDGRTTTDIRQITCEVGLLPCAHGSALFTRGETQSLVSSTFGTSLDEQIIDSLEGEYKERFMLNYIFPPYSVNEAMPMKAPGRREVGHGKLAWRAVNPVLPTKTQFPYSIRVVAETTESNGSSSMATVCGSSLALMYAGVPIKAPVAGIAMGLVKEDEKFAVLSDILGDEDYFGDMDFKVAGTSEGITALQMDIKIRGVNFEIMKIALEQARLGRLHILEQMNKVISKPNNEMSKNAPSTTTLKVDKDKIRDIIGPGGKVIKEICETSGAKIDISDDGTVSIYASDKDKLKVALDKVKAIAIEPEIGEVFNGTVMKILDSGAFVNYLGNKDGFVHISEIAEERIESVGSVLKQGDIVKVKLIGFDNKGKAKLTIKNAEKDKSSANPKPKNSPKEHQEPEKRDNGKKRAWNEDNNAETTEVVTERKYFS</sequence>
<organism>
    <name type="scientific">Rickettsia bellii (strain OSU 85-389)</name>
    <dbReference type="NCBI Taxonomy" id="391896"/>
    <lineage>
        <taxon>Bacteria</taxon>
        <taxon>Pseudomonadati</taxon>
        <taxon>Pseudomonadota</taxon>
        <taxon>Alphaproteobacteria</taxon>
        <taxon>Rickettsiales</taxon>
        <taxon>Rickettsiaceae</taxon>
        <taxon>Rickettsieae</taxon>
        <taxon>Rickettsia</taxon>
        <taxon>belli group</taxon>
    </lineage>
</organism>
<protein>
    <recommendedName>
        <fullName evidence="1">Polyribonucleotide nucleotidyltransferase</fullName>
        <ecNumber evidence="1">2.7.7.8</ecNumber>
    </recommendedName>
    <alternativeName>
        <fullName evidence="1">Polynucleotide phosphorylase</fullName>
        <shortName evidence="1">PNPase</shortName>
    </alternativeName>
</protein>
<feature type="chain" id="PRO_0000329816" description="Polyribonucleotide nucleotidyltransferase">
    <location>
        <begin position="1"/>
        <end position="744"/>
    </location>
</feature>
<feature type="domain" description="KH" evidence="1">
    <location>
        <begin position="554"/>
        <end position="613"/>
    </location>
</feature>
<feature type="domain" description="S1 motif" evidence="1">
    <location>
        <begin position="623"/>
        <end position="691"/>
    </location>
</feature>
<feature type="region of interest" description="Disordered" evidence="2">
    <location>
        <begin position="691"/>
        <end position="744"/>
    </location>
</feature>
<feature type="compositionally biased region" description="Basic and acidic residues" evidence="2">
    <location>
        <begin position="707"/>
        <end position="718"/>
    </location>
</feature>
<feature type="compositionally biased region" description="Polar residues" evidence="2">
    <location>
        <begin position="727"/>
        <end position="736"/>
    </location>
</feature>
<feature type="binding site" evidence="1">
    <location>
        <position position="487"/>
    </location>
    <ligand>
        <name>Mg(2+)</name>
        <dbReference type="ChEBI" id="CHEBI:18420"/>
    </ligand>
</feature>
<feature type="binding site" evidence="1">
    <location>
        <position position="493"/>
    </location>
    <ligand>
        <name>Mg(2+)</name>
        <dbReference type="ChEBI" id="CHEBI:18420"/>
    </ligand>
</feature>
<reference key="1">
    <citation type="submission" date="2007-09" db="EMBL/GenBank/DDBJ databases">
        <title>Complete genome sequencing of Rickettsia bellii.</title>
        <authorList>
            <person name="Madan A."/>
            <person name="Lee H."/>
            <person name="Madan A."/>
            <person name="Yoon J.-G."/>
            <person name="Ryu G.-Y."/>
            <person name="Dasch G."/>
            <person name="Ereemeva M."/>
        </authorList>
    </citation>
    <scope>NUCLEOTIDE SEQUENCE [LARGE SCALE GENOMIC DNA]</scope>
    <source>
        <strain>OSU 85-389</strain>
    </source>
</reference>
<proteinExistence type="inferred from homology"/>
<gene>
    <name evidence="1" type="primary">pnp</name>
    <name type="ordered locus">A1I_04980</name>
</gene>
<dbReference type="EC" id="2.7.7.8" evidence="1"/>
<dbReference type="EMBL" id="CP000849">
    <property type="protein sequence ID" value="ABV79329.1"/>
    <property type="molecule type" value="Genomic_DNA"/>
</dbReference>
<dbReference type="RefSeq" id="WP_011477441.1">
    <property type="nucleotide sequence ID" value="NC_009883.1"/>
</dbReference>
<dbReference type="SMR" id="A8GWV2"/>
<dbReference type="KEGG" id="rbo:A1I_04980"/>
<dbReference type="HOGENOM" id="CLU_004217_2_2_5"/>
<dbReference type="GO" id="GO:0005829">
    <property type="term" value="C:cytosol"/>
    <property type="evidence" value="ECO:0007669"/>
    <property type="project" value="TreeGrafter"/>
</dbReference>
<dbReference type="GO" id="GO:0000175">
    <property type="term" value="F:3'-5'-RNA exonuclease activity"/>
    <property type="evidence" value="ECO:0007669"/>
    <property type="project" value="TreeGrafter"/>
</dbReference>
<dbReference type="GO" id="GO:0000287">
    <property type="term" value="F:magnesium ion binding"/>
    <property type="evidence" value="ECO:0007669"/>
    <property type="project" value="UniProtKB-UniRule"/>
</dbReference>
<dbReference type="GO" id="GO:0004654">
    <property type="term" value="F:polyribonucleotide nucleotidyltransferase activity"/>
    <property type="evidence" value="ECO:0007669"/>
    <property type="project" value="UniProtKB-UniRule"/>
</dbReference>
<dbReference type="GO" id="GO:0003723">
    <property type="term" value="F:RNA binding"/>
    <property type="evidence" value="ECO:0007669"/>
    <property type="project" value="UniProtKB-UniRule"/>
</dbReference>
<dbReference type="GO" id="GO:0006402">
    <property type="term" value="P:mRNA catabolic process"/>
    <property type="evidence" value="ECO:0007669"/>
    <property type="project" value="UniProtKB-UniRule"/>
</dbReference>
<dbReference type="GO" id="GO:0006396">
    <property type="term" value="P:RNA processing"/>
    <property type="evidence" value="ECO:0007669"/>
    <property type="project" value="InterPro"/>
</dbReference>
<dbReference type="CDD" id="cd02393">
    <property type="entry name" value="KH-I_PNPase"/>
    <property type="match status" value="1"/>
</dbReference>
<dbReference type="CDD" id="cd11363">
    <property type="entry name" value="RNase_PH_PNPase_1"/>
    <property type="match status" value="1"/>
</dbReference>
<dbReference type="CDD" id="cd11364">
    <property type="entry name" value="RNase_PH_PNPase_2"/>
    <property type="match status" value="1"/>
</dbReference>
<dbReference type="CDD" id="cd04472">
    <property type="entry name" value="S1_PNPase"/>
    <property type="match status" value="1"/>
</dbReference>
<dbReference type="FunFam" id="3.30.1370.10:FF:000001">
    <property type="entry name" value="Polyribonucleotide nucleotidyltransferase"/>
    <property type="match status" value="1"/>
</dbReference>
<dbReference type="FunFam" id="3.30.230.70:FF:000001">
    <property type="entry name" value="Polyribonucleotide nucleotidyltransferase"/>
    <property type="match status" value="1"/>
</dbReference>
<dbReference type="FunFam" id="3.30.230.70:FF:000002">
    <property type="entry name" value="Polyribonucleotide nucleotidyltransferase"/>
    <property type="match status" value="1"/>
</dbReference>
<dbReference type="FunFam" id="2.40.50.140:FF:000189">
    <property type="entry name" value="Polyribonucleotide nucleotidyltransferase, putative"/>
    <property type="match status" value="1"/>
</dbReference>
<dbReference type="Gene3D" id="3.30.230.70">
    <property type="entry name" value="GHMP Kinase, N-terminal domain"/>
    <property type="match status" value="2"/>
</dbReference>
<dbReference type="Gene3D" id="3.30.1370.10">
    <property type="entry name" value="K Homology domain, type 1"/>
    <property type="match status" value="1"/>
</dbReference>
<dbReference type="Gene3D" id="2.40.50.140">
    <property type="entry name" value="Nucleic acid-binding proteins"/>
    <property type="match status" value="1"/>
</dbReference>
<dbReference type="HAMAP" id="MF_01595">
    <property type="entry name" value="PNPase"/>
    <property type="match status" value="1"/>
</dbReference>
<dbReference type="InterPro" id="IPR001247">
    <property type="entry name" value="ExoRNase_PH_dom1"/>
</dbReference>
<dbReference type="InterPro" id="IPR015847">
    <property type="entry name" value="ExoRNase_PH_dom2"/>
</dbReference>
<dbReference type="InterPro" id="IPR036345">
    <property type="entry name" value="ExoRNase_PH_dom2_sf"/>
</dbReference>
<dbReference type="InterPro" id="IPR004087">
    <property type="entry name" value="KH_dom"/>
</dbReference>
<dbReference type="InterPro" id="IPR004088">
    <property type="entry name" value="KH_dom_type_1"/>
</dbReference>
<dbReference type="InterPro" id="IPR036612">
    <property type="entry name" value="KH_dom_type_1_sf"/>
</dbReference>
<dbReference type="InterPro" id="IPR012340">
    <property type="entry name" value="NA-bd_OB-fold"/>
</dbReference>
<dbReference type="InterPro" id="IPR012162">
    <property type="entry name" value="PNPase"/>
</dbReference>
<dbReference type="InterPro" id="IPR027408">
    <property type="entry name" value="PNPase/RNase_PH_dom_sf"/>
</dbReference>
<dbReference type="InterPro" id="IPR015848">
    <property type="entry name" value="PNPase_PH_RNA-bd_bac/org-type"/>
</dbReference>
<dbReference type="InterPro" id="IPR036456">
    <property type="entry name" value="PNPase_PH_RNA-bd_sf"/>
</dbReference>
<dbReference type="InterPro" id="IPR020568">
    <property type="entry name" value="Ribosomal_Su5_D2-typ_SF"/>
</dbReference>
<dbReference type="InterPro" id="IPR003029">
    <property type="entry name" value="S1_domain"/>
</dbReference>
<dbReference type="NCBIfam" id="TIGR03591">
    <property type="entry name" value="polynuc_phos"/>
    <property type="match status" value="1"/>
</dbReference>
<dbReference type="NCBIfam" id="NF008805">
    <property type="entry name" value="PRK11824.1"/>
    <property type="match status" value="1"/>
</dbReference>
<dbReference type="PANTHER" id="PTHR11252">
    <property type="entry name" value="POLYRIBONUCLEOTIDE NUCLEOTIDYLTRANSFERASE"/>
    <property type="match status" value="1"/>
</dbReference>
<dbReference type="PANTHER" id="PTHR11252:SF0">
    <property type="entry name" value="POLYRIBONUCLEOTIDE NUCLEOTIDYLTRANSFERASE 1, MITOCHONDRIAL"/>
    <property type="match status" value="1"/>
</dbReference>
<dbReference type="Pfam" id="PF00013">
    <property type="entry name" value="KH_1"/>
    <property type="match status" value="1"/>
</dbReference>
<dbReference type="Pfam" id="PF03726">
    <property type="entry name" value="PNPase"/>
    <property type="match status" value="1"/>
</dbReference>
<dbReference type="Pfam" id="PF01138">
    <property type="entry name" value="RNase_PH"/>
    <property type="match status" value="2"/>
</dbReference>
<dbReference type="Pfam" id="PF03725">
    <property type="entry name" value="RNase_PH_C"/>
    <property type="match status" value="1"/>
</dbReference>
<dbReference type="Pfam" id="PF00575">
    <property type="entry name" value="S1"/>
    <property type="match status" value="1"/>
</dbReference>
<dbReference type="PIRSF" id="PIRSF005499">
    <property type="entry name" value="PNPase"/>
    <property type="match status" value="1"/>
</dbReference>
<dbReference type="SMART" id="SM00322">
    <property type="entry name" value="KH"/>
    <property type="match status" value="1"/>
</dbReference>
<dbReference type="SMART" id="SM00316">
    <property type="entry name" value="S1"/>
    <property type="match status" value="1"/>
</dbReference>
<dbReference type="SUPFAM" id="SSF54791">
    <property type="entry name" value="Eukaryotic type KH-domain (KH-domain type I)"/>
    <property type="match status" value="1"/>
</dbReference>
<dbReference type="SUPFAM" id="SSF50249">
    <property type="entry name" value="Nucleic acid-binding proteins"/>
    <property type="match status" value="1"/>
</dbReference>
<dbReference type="SUPFAM" id="SSF46915">
    <property type="entry name" value="Polynucleotide phosphorylase/guanosine pentaphosphate synthase (PNPase/GPSI), domain 3"/>
    <property type="match status" value="1"/>
</dbReference>
<dbReference type="SUPFAM" id="SSF55666">
    <property type="entry name" value="Ribonuclease PH domain 2-like"/>
    <property type="match status" value="2"/>
</dbReference>
<dbReference type="SUPFAM" id="SSF54211">
    <property type="entry name" value="Ribosomal protein S5 domain 2-like"/>
    <property type="match status" value="2"/>
</dbReference>
<dbReference type="PROSITE" id="PS50084">
    <property type="entry name" value="KH_TYPE_1"/>
    <property type="match status" value="1"/>
</dbReference>
<dbReference type="PROSITE" id="PS50126">
    <property type="entry name" value="S1"/>
    <property type="match status" value="1"/>
</dbReference>
<keyword id="KW-0963">Cytoplasm</keyword>
<keyword id="KW-0460">Magnesium</keyword>
<keyword id="KW-0479">Metal-binding</keyword>
<keyword id="KW-0548">Nucleotidyltransferase</keyword>
<keyword id="KW-0694">RNA-binding</keyword>
<keyword id="KW-0808">Transferase</keyword>
<name>PNP_RICB8</name>
<comment type="function">
    <text evidence="1">Involved in mRNA degradation. Catalyzes the phosphorolysis of single-stranded polyribonucleotides processively in the 3'- to 5'-direction.</text>
</comment>
<comment type="catalytic activity">
    <reaction evidence="1">
        <text>RNA(n+1) + phosphate = RNA(n) + a ribonucleoside 5'-diphosphate</text>
        <dbReference type="Rhea" id="RHEA:22096"/>
        <dbReference type="Rhea" id="RHEA-COMP:14527"/>
        <dbReference type="Rhea" id="RHEA-COMP:17342"/>
        <dbReference type="ChEBI" id="CHEBI:43474"/>
        <dbReference type="ChEBI" id="CHEBI:57930"/>
        <dbReference type="ChEBI" id="CHEBI:140395"/>
        <dbReference type="EC" id="2.7.7.8"/>
    </reaction>
</comment>
<comment type="cofactor">
    <cofactor evidence="1">
        <name>Mg(2+)</name>
        <dbReference type="ChEBI" id="CHEBI:18420"/>
    </cofactor>
</comment>
<comment type="subcellular location">
    <subcellularLocation>
        <location evidence="1">Cytoplasm</location>
    </subcellularLocation>
</comment>
<comment type="similarity">
    <text evidence="1">Belongs to the polyribonucleotide nucleotidyltransferase family.</text>
</comment>